<sequence length="185" mass="19601">MQGLLLSLSLLASAAVGVLASDDLKIDVTLPVECDRVTKKGDKINVHYKGTLKSNGEKFDSSYDRQSPFSFKLGAGMVIKGWDEGLVDMCIGEKRTLTIGPSYGYGDRNVGPIPAGSTLVFETELVGIEGVPKPESIVTKSATDAPESTASAKVVEKVASVAKQAAEVVETIIADTDDTQEHNEL</sequence>
<evidence type="ECO:0000250" key="1"/>
<evidence type="ECO:0000255" key="2"/>
<evidence type="ECO:0000255" key="3">
    <source>
        <dbReference type="PROSITE-ProRule" id="PRU00277"/>
    </source>
</evidence>
<evidence type="ECO:0000255" key="4">
    <source>
        <dbReference type="PROSITE-ProRule" id="PRU10138"/>
    </source>
</evidence>
<evidence type="ECO:0000305" key="5"/>
<organism>
    <name type="scientific">Podospora anserina</name>
    <name type="common">Pleurage anserina</name>
    <dbReference type="NCBI Taxonomy" id="2587412"/>
    <lineage>
        <taxon>Eukaryota</taxon>
        <taxon>Fungi</taxon>
        <taxon>Dikarya</taxon>
        <taxon>Ascomycota</taxon>
        <taxon>Pezizomycotina</taxon>
        <taxon>Sordariomycetes</taxon>
        <taxon>Sordariomycetidae</taxon>
        <taxon>Sordariales</taxon>
        <taxon>Podosporaceae</taxon>
        <taxon>Podospora</taxon>
    </lineage>
</organism>
<keyword id="KW-0256">Endoplasmic reticulum</keyword>
<keyword id="KW-0413">Isomerase</keyword>
<keyword id="KW-0697">Rotamase</keyword>
<keyword id="KW-0732">Signal</keyword>
<name>FKBP2_PODAS</name>
<proteinExistence type="inferred from homology"/>
<accession>Q86ZF2</accession>
<comment type="function">
    <text evidence="1">PPIases accelerate the folding of proteins. It catalyzes the cis-trans isomerization of proline imidic peptide bonds in oligopeptides (By similarity).</text>
</comment>
<comment type="catalytic activity">
    <reaction>
        <text>[protein]-peptidylproline (omega=180) = [protein]-peptidylproline (omega=0)</text>
        <dbReference type="Rhea" id="RHEA:16237"/>
        <dbReference type="Rhea" id="RHEA-COMP:10747"/>
        <dbReference type="Rhea" id="RHEA-COMP:10748"/>
        <dbReference type="ChEBI" id="CHEBI:83833"/>
        <dbReference type="ChEBI" id="CHEBI:83834"/>
        <dbReference type="EC" id="5.2.1.8"/>
    </reaction>
</comment>
<comment type="activity regulation">
    <text evidence="1">Inhibited by both FK506 and rapamycin.</text>
</comment>
<comment type="subcellular location">
    <subcellularLocation>
        <location evidence="4">Endoplasmic reticulum</location>
    </subcellularLocation>
</comment>
<comment type="similarity">
    <text evidence="5">Belongs to the FKBP-type PPIase family. FKBP2 subfamily.</text>
</comment>
<reference key="1">
    <citation type="journal article" date="2003" name="Fungal Genet. Biol.">
        <title>Characterization of the genomic organization of the region bordering the centromere of chromosome V of Podospora anserina by direct sequencing.</title>
        <authorList>
            <person name="Silar P."/>
            <person name="Barreau C."/>
            <person name="Debuchy R."/>
            <person name="Kicka S."/>
            <person name="Turcq B."/>
            <person name="Sainsard-Chanet A."/>
            <person name="Sellem C.H."/>
            <person name="Billault A."/>
            <person name="Cattolico L."/>
            <person name="Duprat S."/>
            <person name="Weissenbach J."/>
        </authorList>
    </citation>
    <scope>NUCLEOTIDE SEQUENCE [LARGE SCALE GENOMIC DNA]</scope>
    <source>
        <strain>s</strain>
    </source>
</reference>
<protein>
    <recommendedName>
        <fullName>FK506-binding protein 2</fullName>
        <ecNumber>5.2.1.8</ecNumber>
    </recommendedName>
    <alternativeName>
        <fullName>Peptidyl-prolyl cis-trans isomerase</fullName>
        <shortName>PPIase</shortName>
    </alternativeName>
    <alternativeName>
        <fullName>Rotamase</fullName>
    </alternativeName>
</protein>
<dbReference type="EC" id="5.2.1.8"/>
<dbReference type="EMBL" id="AL627362">
    <property type="protein sequence ID" value="CAD60614.1"/>
    <property type="molecule type" value="Genomic_DNA"/>
</dbReference>
<dbReference type="SMR" id="Q86ZF2"/>
<dbReference type="VEuPathDB" id="FungiDB:PODANS_5_5270"/>
<dbReference type="GO" id="GO:0005783">
    <property type="term" value="C:endoplasmic reticulum"/>
    <property type="evidence" value="ECO:0007669"/>
    <property type="project" value="UniProtKB-SubCell"/>
</dbReference>
<dbReference type="GO" id="GO:0003755">
    <property type="term" value="F:peptidyl-prolyl cis-trans isomerase activity"/>
    <property type="evidence" value="ECO:0007669"/>
    <property type="project" value="UniProtKB-KW"/>
</dbReference>
<dbReference type="GO" id="GO:0061077">
    <property type="term" value="P:chaperone-mediated protein folding"/>
    <property type="evidence" value="ECO:0007669"/>
    <property type="project" value="InterPro"/>
</dbReference>
<dbReference type="FunFam" id="3.10.50.40:FF:000006">
    <property type="entry name" value="Peptidyl-prolyl cis-trans isomerase"/>
    <property type="match status" value="1"/>
</dbReference>
<dbReference type="Gene3D" id="3.10.50.40">
    <property type="match status" value="1"/>
</dbReference>
<dbReference type="InterPro" id="IPR044609">
    <property type="entry name" value="FKBP2/11"/>
</dbReference>
<dbReference type="InterPro" id="IPR046357">
    <property type="entry name" value="PPIase_dom_sf"/>
</dbReference>
<dbReference type="InterPro" id="IPR001179">
    <property type="entry name" value="PPIase_FKBP_dom"/>
</dbReference>
<dbReference type="PANTHER" id="PTHR45779">
    <property type="entry name" value="PEPTIDYLPROLYL ISOMERASE"/>
    <property type="match status" value="1"/>
</dbReference>
<dbReference type="PANTHER" id="PTHR45779:SF7">
    <property type="entry name" value="PEPTIDYLPROLYL ISOMERASE"/>
    <property type="match status" value="1"/>
</dbReference>
<dbReference type="Pfam" id="PF00254">
    <property type="entry name" value="FKBP_C"/>
    <property type="match status" value="1"/>
</dbReference>
<dbReference type="SUPFAM" id="SSF54534">
    <property type="entry name" value="FKBP-like"/>
    <property type="match status" value="1"/>
</dbReference>
<dbReference type="PROSITE" id="PS00014">
    <property type="entry name" value="ER_TARGET"/>
    <property type="match status" value="1"/>
</dbReference>
<dbReference type="PROSITE" id="PS50059">
    <property type="entry name" value="FKBP_PPIASE"/>
    <property type="match status" value="1"/>
</dbReference>
<gene>
    <name type="primary">FPR2</name>
    <name type="ORF">Pa5G0006</name>
</gene>
<feature type="signal peptide" evidence="2">
    <location>
        <begin position="1"/>
        <end position="20"/>
    </location>
</feature>
<feature type="chain" id="PRO_0000233071" description="FK506-binding protein 2">
    <location>
        <begin position="21"/>
        <end position="185"/>
    </location>
</feature>
<feature type="domain" description="PPIase FKBP-type" evidence="3">
    <location>
        <begin position="41"/>
        <end position="129"/>
    </location>
</feature>
<feature type="short sequence motif" description="Prevents secretion from ER" evidence="4">
    <location>
        <begin position="182"/>
        <end position="185"/>
    </location>
</feature>